<accession>Q19714</accession>
<sequence>MLGDCLLIIAIAFGTALAGEGITWLLVYRSDHYKRLKADMDKKTKKLEKKKQEVGDTNDKNIKRKLEREEERLKATNRDMSMFKMKSMFAIGLAFTALLSTFNSIFEGRVVAKLPFYPIGFIQGLSHRNLIGEDMTDCSFIFLYILCTMTVRQNLQKILGFAPSRAMARQQSSPWAPPNSQMNYLR</sequence>
<protein>
    <recommendedName>
        <fullName evidence="1">Calcium load-activated calcium channel homolog</fullName>
        <shortName evidence="1">CLAC channel</shortName>
    </recommendedName>
</protein>
<evidence type="ECO:0000250" key="1">
    <source>
        <dbReference type="UniProtKB" id="Q9UM00"/>
    </source>
</evidence>
<evidence type="ECO:0000255" key="2"/>
<evidence type="ECO:0000305" key="3"/>
<evidence type="ECO:0000305" key="4">
    <source>
    </source>
</evidence>
<evidence type="ECO:0000312" key="5">
    <source>
        <dbReference type="WormBase" id="F22B5.10"/>
    </source>
</evidence>
<gene>
    <name evidence="5" type="ORF">F22B5.10</name>
</gene>
<keyword id="KW-0106">Calcium</keyword>
<keyword id="KW-0107">Calcium channel</keyword>
<keyword id="KW-0109">Calcium transport</keyword>
<keyword id="KW-0175">Coiled coil</keyword>
<keyword id="KW-0256">Endoplasmic reticulum</keyword>
<keyword id="KW-0407">Ion channel</keyword>
<keyword id="KW-0406">Ion transport</keyword>
<keyword id="KW-0472">Membrane</keyword>
<keyword id="KW-1185">Reference proteome</keyword>
<keyword id="KW-0812">Transmembrane</keyword>
<keyword id="KW-1133">Transmembrane helix</keyword>
<keyword id="KW-0813">Transport</keyword>
<proteinExistence type="inferred from homology"/>
<name>TMCO1_CAEEL</name>
<feature type="chain" id="PRO_0000437216" description="Calcium load-activated calcium channel homolog">
    <location>
        <begin position="1"/>
        <end position="186"/>
    </location>
</feature>
<feature type="topological domain" description="Cytoplasmic" evidence="1">
    <location>
        <begin position="1"/>
        <end position="6"/>
    </location>
</feature>
<feature type="transmembrane region" description="Helical" evidence="2">
    <location>
        <begin position="7"/>
        <end position="27"/>
    </location>
</feature>
<feature type="topological domain" description="Lumenal" evidence="1">
    <location>
        <begin position="28"/>
        <end position="87"/>
    </location>
</feature>
<feature type="transmembrane region" description="Helical" evidence="2">
    <location>
        <begin position="88"/>
        <end position="108"/>
    </location>
</feature>
<feature type="topological domain" description="Cytoplasmic" evidence="1">
    <location>
        <begin position="109"/>
        <end position="134"/>
    </location>
</feature>
<feature type="intramembrane region" description="Pore-forming" evidence="1">
    <location>
        <begin position="135"/>
        <end position="151"/>
    </location>
</feature>
<feature type="topological domain" description="Cytoplasmic" evidence="1">
    <location>
        <begin position="152"/>
        <end position="186"/>
    </location>
</feature>
<feature type="coiled-coil region" evidence="2">
    <location>
        <begin position="30"/>
        <end position="86"/>
    </location>
</feature>
<comment type="function">
    <text evidence="4">Calcium-selective channel required to prevent calcium stores from overfilling.</text>
</comment>
<comment type="subunit">
    <text evidence="1">Homodimer and homotetramer.</text>
</comment>
<comment type="subcellular location">
    <subcellularLocation>
        <location evidence="1">Endoplasmic reticulum membrane</location>
        <topology evidence="1">Multi-pass membrane protein</topology>
    </subcellularLocation>
</comment>
<comment type="similarity">
    <text evidence="3">Belongs to the TMCO1 family.</text>
</comment>
<organism>
    <name type="scientific">Caenorhabditis elegans</name>
    <dbReference type="NCBI Taxonomy" id="6239"/>
    <lineage>
        <taxon>Eukaryota</taxon>
        <taxon>Metazoa</taxon>
        <taxon>Ecdysozoa</taxon>
        <taxon>Nematoda</taxon>
        <taxon>Chromadorea</taxon>
        <taxon>Rhabditida</taxon>
        <taxon>Rhabditina</taxon>
        <taxon>Rhabditomorpha</taxon>
        <taxon>Rhabditoidea</taxon>
        <taxon>Rhabditidae</taxon>
        <taxon>Peloderinae</taxon>
        <taxon>Caenorhabditis</taxon>
    </lineage>
</organism>
<reference key="1">
    <citation type="journal article" date="1998" name="Science">
        <title>Genome sequence of the nematode C. elegans: a platform for investigating biology.</title>
        <authorList>
            <consortium name="The C. elegans sequencing consortium"/>
        </authorList>
    </citation>
    <scope>NUCLEOTIDE SEQUENCE [LARGE SCALE GENOMIC DNA]</scope>
    <source>
        <strain>Bristol N2</strain>
    </source>
</reference>
<reference key="2">
    <citation type="journal article" date="2016" name="Cell">
        <title>TMCO1 is an ER Ca(2+) load-activated Ca(2+) channel.</title>
        <authorList>
            <person name="Wang Q.C."/>
            <person name="Zheng Q."/>
            <person name="Tan H."/>
            <person name="Zhang B."/>
            <person name="Li X."/>
            <person name="Yang Y."/>
            <person name="Yu J."/>
            <person name="Liu Y."/>
            <person name="Chai H."/>
            <person name="Wang X."/>
            <person name="Sun Z."/>
            <person name="Wang J.Q."/>
            <person name="Zhu S."/>
            <person name="Wang F."/>
            <person name="Yang M."/>
            <person name="Guo C."/>
            <person name="Wang H."/>
            <person name="Zheng Q."/>
            <person name="Li Y."/>
            <person name="Chen Q."/>
            <person name="Zhou A."/>
            <person name="Tang T.S."/>
        </authorList>
    </citation>
    <scope>FUNCTION</scope>
</reference>
<dbReference type="EMBL" id="BX284602">
    <property type="protein sequence ID" value="CAA90361.1"/>
    <property type="molecule type" value="Genomic_DNA"/>
</dbReference>
<dbReference type="PIR" id="T21243">
    <property type="entry name" value="T21243"/>
</dbReference>
<dbReference type="RefSeq" id="NP_495786.1">
    <property type="nucleotide sequence ID" value="NM_063385.8"/>
</dbReference>
<dbReference type="SMR" id="Q19714"/>
<dbReference type="FunCoup" id="Q19714">
    <property type="interactions" value="2541"/>
</dbReference>
<dbReference type="STRING" id="6239.F22B5.10.1"/>
<dbReference type="PaxDb" id="6239-F22B5.10"/>
<dbReference type="PeptideAtlas" id="Q19714"/>
<dbReference type="EnsemblMetazoa" id="F22B5.10.1">
    <property type="protein sequence ID" value="F22B5.10.1"/>
    <property type="gene ID" value="WBGene00009045"/>
</dbReference>
<dbReference type="GeneID" id="174352"/>
<dbReference type="KEGG" id="cel:CELE_F22B5.10"/>
<dbReference type="UCSC" id="F22B5.10">
    <property type="organism name" value="c. elegans"/>
</dbReference>
<dbReference type="AGR" id="WB:WBGene00009045"/>
<dbReference type="CTD" id="174352"/>
<dbReference type="WormBase" id="F22B5.10">
    <property type="protein sequence ID" value="CE02196"/>
    <property type="gene ID" value="WBGene00009045"/>
</dbReference>
<dbReference type="eggNOG" id="KOG3312">
    <property type="taxonomic scope" value="Eukaryota"/>
</dbReference>
<dbReference type="GeneTree" id="ENSGT00390000002659"/>
<dbReference type="HOGENOM" id="CLU_081121_0_0_1"/>
<dbReference type="InParanoid" id="Q19714"/>
<dbReference type="OMA" id="GMFGDFK"/>
<dbReference type="OrthoDB" id="342726at2759"/>
<dbReference type="PhylomeDB" id="Q19714"/>
<dbReference type="PRO" id="PR:Q19714"/>
<dbReference type="Proteomes" id="UP000001940">
    <property type="component" value="Chromosome II"/>
</dbReference>
<dbReference type="Bgee" id="WBGene00009045">
    <property type="expression patterns" value="Expressed in embryo and 4 other cell types or tissues"/>
</dbReference>
<dbReference type="GO" id="GO:0005737">
    <property type="term" value="C:cytoplasm"/>
    <property type="evidence" value="ECO:0007005"/>
    <property type="project" value="WormBase"/>
</dbReference>
<dbReference type="GO" id="GO:0005783">
    <property type="term" value="C:endoplasmic reticulum"/>
    <property type="evidence" value="ECO:0000318"/>
    <property type="project" value="GO_Central"/>
</dbReference>
<dbReference type="GO" id="GO:0005789">
    <property type="term" value="C:endoplasmic reticulum membrane"/>
    <property type="evidence" value="ECO:0007669"/>
    <property type="project" value="UniProtKB-SubCell"/>
</dbReference>
<dbReference type="GO" id="GO:0055120">
    <property type="term" value="C:striated muscle dense body"/>
    <property type="evidence" value="ECO:0007005"/>
    <property type="project" value="WormBase"/>
</dbReference>
<dbReference type="GO" id="GO:0005262">
    <property type="term" value="F:calcium channel activity"/>
    <property type="evidence" value="ECO:0000318"/>
    <property type="project" value="GO_Central"/>
</dbReference>
<dbReference type="GO" id="GO:0070588">
    <property type="term" value="P:calcium ion transmembrane transport"/>
    <property type="evidence" value="ECO:0000314"/>
    <property type="project" value="UniProtKB"/>
</dbReference>
<dbReference type="GO" id="GO:0032469">
    <property type="term" value="P:endoplasmic reticulum calcium ion homeostasis"/>
    <property type="evidence" value="ECO:0000314"/>
    <property type="project" value="UniProtKB"/>
</dbReference>
<dbReference type="InterPro" id="IPR002809">
    <property type="entry name" value="EMC3/TMCO1"/>
</dbReference>
<dbReference type="InterPro" id="IPR008559">
    <property type="entry name" value="TMCO1"/>
</dbReference>
<dbReference type="PANTHER" id="PTHR20917:SF0">
    <property type="entry name" value="CALCIUM LOAD-ACTIVATED CALCIUM CHANNEL"/>
    <property type="match status" value="1"/>
</dbReference>
<dbReference type="PANTHER" id="PTHR20917">
    <property type="entry name" value="PNAS-RELATED"/>
    <property type="match status" value="1"/>
</dbReference>
<dbReference type="Pfam" id="PF01956">
    <property type="entry name" value="EMC3_TMCO1"/>
    <property type="match status" value="1"/>
</dbReference>
<dbReference type="PIRSF" id="PIRSF023322">
    <property type="entry name" value="DUF841_euk"/>
    <property type="match status" value="1"/>
</dbReference>
<dbReference type="SMART" id="SM01415">
    <property type="entry name" value="DUF106"/>
    <property type="match status" value="1"/>
</dbReference>